<gene>
    <name evidence="1" type="primary">alc</name>
    <name type="ordered locus">ABBFA_000126</name>
</gene>
<organism>
    <name type="scientific">Acinetobacter baumannii (strain AB307-0294)</name>
    <dbReference type="NCBI Taxonomy" id="557600"/>
    <lineage>
        <taxon>Bacteria</taxon>
        <taxon>Pseudomonadati</taxon>
        <taxon>Pseudomonadota</taxon>
        <taxon>Gammaproteobacteria</taxon>
        <taxon>Moraxellales</taxon>
        <taxon>Moraxellaceae</taxon>
        <taxon>Acinetobacter</taxon>
        <taxon>Acinetobacter calcoaceticus/baumannii complex</taxon>
    </lineage>
</organism>
<protein>
    <recommendedName>
        <fullName evidence="1">Probable allantoicase</fullName>
        <ecNumber evidence="1">3.5.3.4</ecNumber>
    </recommendedName>
    <alternativeName>
        <fullName evidence="1">Allantoate amidinohydrolase</fullName>
    </alternativeName>
</protein>
<dbReference type="EC" id="3.5.3.4" evidence="1"/>
<dbReference type="EMBL" id="CP001172">
    <property type="protein sequence ID" value="ACJ59011.1"/>
    <property type="molecule type" value="Genomic_DNA"/>
</dbReference>
<dbReference type="RefSeq" id="WP_000212411.1">
    <property type="nucleotide sequence ID" value="NZ_CP001172.1"/>
</dbReference>
<dbReference type="SMR" id="B7GV54"/>
<dbReference type="HOGENOM" id="CLU_038797_1_2_6"/>
<dbReference type="UniPathway" id="UPA00395">
    <property type="reaction ID" value="UER00654"/>
</dbReference>
<dbReference type="Proteomes" id="UP000006924">
    <property type="component" value="Chromosome"/>
</dbReference>
<dbReference type="GO" id="GO:0004037">
    <property type="term" value="F:allantoicase activity"/>
    <property type="evidence" value="ECO:0007669"/>
    <property type="project" value="UniProtKB-UniRule"/>
</dbReference>
<dbReference type="GO" id="GO:0000256">
    <property type="term" value="P:allantoin catabolic process"/>
    <property type="evidence" value="ECO:0007669"/>
    <property type="project" value="UniProtKB-UniRule"/>
</dbReference>
<dbReference type="GO" id="GO:0006144">
    <property type="term" value="P:purine nucleobase metabolic process"/>
    <property type="evidence" value="ECO:0007669"/>
    <property type="project" value="UniProtKB-KW"/>
</dbReference>
<dbReference type="Gene3D" id="2.60.120.260">
    <property type="entry name" value="Galactose-binding domain-like"/>
    <property type="match status" value="2"/>
</dbReference>
<dbReference type="HAMAP" id="MF_00813">
    <property type="entry name" value="Allantoicase"/>
    <property type="match status" value="1"/>
</dbReference>
<dbReference type="InterPro" id="IPR005164">
    <property type="entry name" value="Allantoicase"/>
</dbReference>
<dbReference type="InterPro" id="IPR015908">
    <property type="entry name" value="Allantoicase_dom"/>
</dbReference>
<dbReference type="InterPro" id="IPR008979">
    <property type="entry name" value="Galactose-bd-like_sf"/>
</dbReference>
<dbReference type="NCBIfam" id="TIGR02961">
    <property type="entry name" value="allantoicase"/>
    <property type="match status" value="1"/>
</dbReference>
<dbReference type="PANTHER" id="PTHR12045">
    <property type="entry name" value="ALLANTOICASE"/>
    <property type="match status" value="1"/>
</dbReference>
<dbReference type="PANTHER" id="PTHR12045:SF3">
    <property type="entry name" value="INACTIVE ALLANTOICASE-RELATED"/>
    <property type="match status" value="1"/>
</dbReference>
<dbReference type="Pfam" id="PF03561">
    <property type="entry name" value="Allantoicase"/>
    <property type="match status" value="2"/>
</dbReference>
<dbReference type="PIRSF" id="PIRSF016516">
    <property type="entry name" value="Allantoicase"/>
    <property type="match status" value="1"/>
</dbReference>
<dbReference type="SUPFAM" id="SSF49785">
    <property type="entry name" value="Galactose-binding domain-like"/>
    <property type="match status" value="2"/>
</dbReference>
<evidence type="ECO:0000255" key="1">
    <source>
        <dbReference type="HAMAP-Rule" id="MF_00813"/>
    </source>
</evidence>
<comment type="catalytic activity">
    <reaction evidence="1">
        <text>allantoate + H2O = (S)-ureidoglycolate + urea</text>
        <dbReference type="Rhea" id="RHEA:11016"/>
        <dbReference type="ChEBI" id="CHEBI:15377"/>
        <dbReference type="ChEBI" id="CHEBI:16199"/>
        <dbReference type="ChEBI" id="CHEBI:17536"/>
        <dbReference type="ChEBI" id="CHEBI:57296"/>
        <dbReference type="EC" id="3.5.3.4"/>
    </reaction>
</comment>
<comment type="pathway">
    <text evidence="1">Nitrogen metabolism; (S)-allantoin degradation; (S)-ureidoglycolate from allantoate (aminidohydrolase route): step 1/1.</text>
</comment>
<comment type="similarity">
    <text evidence="1">Belongs to the allantoicase family.</text>
</comment>
<keyword id="KW-0378">Hydrolase</keyword>
<keyword id="KW-0659">Purine metabolism</keyword>
<accession>B7GV54</accession>
<sequence>MATLHAPAFELPEILNTKTNLADARIGAQVIECSDDFFAEAKRMLQFEAPIFVEDKFDDHGKWMDGWETRRKRHAGYDWCIVKLGVSGKISALDIDTTFFTGNYPASASLEACYAPNGDLTGVTWQSILENTELGPSQHHIFMVNNDAIFTHIRLNIFPDGGVARLRVYGDVHIQVTDHEQTLDLLALENGGRVIAYSDAHFGHPRNLINPGRGVNMGDGWETKRRRAPGYDWCILALGKSGKIEKIEIDTAHFKGNFPAEVSIQAVYLENATDAQLIPQSMFWSYLLEAQPMQMDHIHEYVNEILKHEKISHIRINMIPDGGISRVRLWGKIAKS</sequence>
<proteinExistence type="inferred from homology"/>
<name>ALLC_ACIB3</name>
<reference key="1">
    <citation type="journal article" date="2008" name="J. Bacteriol.">
        <title>Comparative genome sequence analysis of multidrug-resistant Acinetobacter baumannii.</title>
        <authorList>
            <person name="Adams M.D."/>
            <person name="Goglin K."/>
            <person name="Molyneaux N."/>
            <person name="Hujer K.M."/>
            <person name="Lavender H."/>
            <person name="Jamison J.J."/>
            <person name="MacDonald I.J."/>
            <person name="Martin K.M."/>
            <person name="Russo T."/>
            <person name="Campagnari A.A."/>
            <person name="Hujer A.M."/>
            <person name="Bonomo R.A."/>
            <person name="Gill S.R."/>
        </authorList>
    </citation>
    <scope>NUCLEOTIDE SEQUENCE [LARGE SCALE GENOMIC DNA]</scope>
    <source>
        <strain>AB307-0294</strain>
    </source>
</reference>
<feature type="chain" id="PRO_1000134084" description="Probable allantoicase">
    <location>
        <begin position="1"/>
        <end position="336"/>
    </location>
</feature>